<comment type="function">
    <text evidence="1">Involved in cell division and chromosome segregation.</text>
</comment>
<comment type="similarity">
    <text evidence="1">Belongs to the WhiA family.</text>
</comment>
<gene>
    <name evidence="1" type="primary">whiA</name>
    <name type="ordered locus">SPD_1394</name>
</gene>
<name>WHIA_STRP2</name>
<proteinExistence type="inferred from homology"/>
<dbReference type="EMBL" id="CP000410">
    <property type="protein sequence ID" value="ABJ53810.1"/>
    <property type="molecule type" value="Genomic_DNA"/>
</dbReference>
<dbReference type="RefSeq" id="WP_000011306.1">
    <property type="nucleotide sequence ID" value="NZ_JAMLJR010000008.1"/>
</dbReference>
<dbReference type="SMR" id="Q04JI4"/>
<dbReference type="PaxDb" id="373153-SPD_1394"/>
<dbReference type="KEGG" id="spd:SPD_1394"/>
<dbReference type="eggNOG" id="COG1481">
    <property type="taxonomic scope" value="Bacteria"/>
</dbReference>
<dbReference type="HOGENOM" id="CLU_053282_0_0_9"/>
<dbReference type="BioCyc" id="SPNE373153:G1G6V-1500-MONOMER"/>
<dbReference type="Proteomes" id="UP000001452">
    <property type="component" value="Chromosome"/>
</dbReference>
<dbReference type="GO" id="GO:0003677">
    <property type="term" value="F:DNA binding"/>
    <property type="evidence" value="ECO:0007669"/>
    <property type="project" value="UniProtKB-UniRule"/>
</dbReference>
<dbReference type="GO" id="GO:0051301">
    <property type="term" value="P:cell division"/>
    <property type="evidence" value="ECO:0007669"/>
    <property type="project" value="UniProtKB-UniRule"/>
</dbReference>
<dbReference type="GO" id="GO:0043937">
    <property type="term" value="P:regulation of sporulation"/>
    <property type="evidence" value="ECO:0007669"/>
    <property type="project" value="InterPro"/>
</dbReference>
<dbReference type="FunFam" id="3.10.28.10:FF:000004">
    <property type="entry name" value="Probable cell division protein WhiA"/>
    <property type="match status" value="1"/>
</dbReference>
<dbReference type="Gene3D" id="3.10.28.10">
    <property type="entry name" value="Homing endonucleases"/>
    <property type="match status" value="1"/>
</dbReference>
<dbReference type="HAMAP" id="MF_01420">
    <property type="entry name" value="HTH_type_WhiA"/>
    <property type="match status" value="1"/>
</dbReference>
<dbReference type="InterPro" id="IPR027434">
    <property type="entry name" value="Homing_endonucl"/>
</dbReference>
<dbReference type="InterPro" id="IPR018478">
    <property type="entry name" value="Sporu_reg_WhiA_N_dom"/>
</dbReference>
<dbReference type="InterPro" id="IPR003802">
    <property type="entry name" value="Sporulation_regulator_WhiA"/>
</dbReference>
<dbReference type="InterPro" id="IPR023054">
    <property type="entry name" value="Sporulation_regulator_WhiA_C"/>
</dbReference>
<dbReference type="InterPro" id="IPR039518">
    <property type="entry name" value="WhiA_LAGLIDADG_dom"/>
</dbReference>
<dbReference type="NCBIfam" id="TIGR00647">
    <property type="entry name" value="DNA_bind_WhiA"/>
    <property type="match status" value="1"/>
</dbReference>
<dbReference type="PANTHER" id="PTHR37307">
    <property type="entry name" value="CELL DIVISION PROTEIN WHIA-RELATED"/>
    <property type="match status" value="1"/>
</dbReference>
<dbReference type="PANTHER" id="PTHR37307:SF1">
    <property type="entry name" value="CELL DIVISION PROTEIN WHIA-RELATED"/>
    <property type="match status" value="1"/>
</dbReference>
<dbReference type="Pfam" id="PF02650">
    <property type="entry name" value="HTH_WhiA"/>
    <property type="match status" value="1"/>
</dbReference>
<dbReference type="Pfam" id="PF14527">
    <property type="entry name" value="LAGLIDADG_WhiA"/>
    <property type="match status" value="1"/>
</dbReference>
<dbReference type="Pfam" id="PF10298">
    <property type="entry name" value="WhiA_N"/>
    <property type="match status" value="1"/>
</dbReference>
<dbReference type="SUPFAM" id="SSF55608">
    <property type="entry name" value="Homing endonucleases"/>
    <property type="match status" value="1"/>
</dbReference>
<organism>
    <name type="scientific">Streptococcus pneumoniae serotype 2 (strain D39 / NCTC 7466)</name>
    <dbReference type="NCBI Taxonomy" id="373153"/>
    <lineage>
        <taxon>Bacteria</taxon>
        <taxon>Bacillati</taxon>
        <taxon>Bacillota</taxon>
        <taxon>Bacilli</taxon>
        <taxon>Lactobacillales</taxon>
        <taxon>Streptococcaceae</taxon>
        <taxon>Streptococcus</taxon>
    </lineage>
</organism>
<feature type="chain" id="PRO_0000376581" description="Probable cell division protein WhiA">
    <location>
        <begin position="1"/>
        <end position="303"/>
    </location>
</feature>
<feature type="DNA-binding region" description="H-T-H motif" evidence="1">
    <location>
        <begin position="272"/>
        <end position="303"/>
    </location>
</feature>
<protein>
    <recommendedName>
        <fullName evidence="1">Probable cell division protein WhiA</fullName>
    </recommendedName>
</protein>
<evidence type="ECO:0000255" key="1">
    <source>
        <dbReference type="HAMAP-Rule" id="MF_01420"/>
    </source>
</evidence>
<reference key="1">
    <citation type="journal article" date="2007" name="J. Bacteriol.">
        <title>Genome sequence of Avery's virulent serotype 2 strain D39 of Streptococcus pneumoniae and comparison with that of unencapsulated laboratory strain R6.</title>
        <authorList>
            <person name="Lanie J.A."/>
            <person name="Ng W.-L."/>
            <person name="Kazmierczak K.M."/>
            <person name="Andrzejewski T.M."/>
            <person name="Davidsen T.M."/>
            <person name="Wayne K.J."/>
            <person name="Tettelin H."/>
            <person name="Glass J.I."/>
            <person name="Winkler M.E."/>
        </authorList>
    </citation>
    <scope>NUCLEOTIDE SEQUENCE [LARGE SCALE GENOMIC DNA]</scope>
    <source>
        <strain>D39 / NCTC 7466</strain>
    </source>
</reference>
<keyword id="KW-0131">Cell cycle</keyword>
<keyword id="KW-0132">Cell division</keyword>
<keyword id="KW-0238">DNA-binding</keyword>
<keyword id="KW-1185">Reference proteome</keyword>
<accession>Q04JI4</accession>
<sequence length="303" mass="34092">MSFTVAVKEEILGQHHLSWHELSAIIKMSGSIGLSTSGLTLSVVTENAKLARHLYESFLHFYEIKSEIRHHQRSNLRKNRVYTVFTDEKVQDLLSDLHLADSFFGLETGIDEAILSDEEAGRAYLCGAFLANGSIRDPESGKYQLEISSVYLDHAQGIASLLQQFLLDAKVLERKKGAVTYLQRAEDIMDFLIVIGAMQARDDFERVKILRETRNDLNRANNAETANIARTVSASMKTINNISKIKDIMGLENLPVDLQEVAQLRIQHPDYSIQQLADSLSTPLTKSGVNHRLRKINKIADEL</sequence>